<proteinExistence type="inferred from homology"/>
<reference key="1">
    <citation type="submission" date="2008-02" db="EMBL/GenBank/DDBJ databases">
        <title>Complete sequence of Escherichia coli C str. ATCC 8739.</title>
        <authorList>
            <person name="Copeland A."/>
            <person name="Lucas S."/>
            <person name="Lapidus A."/>
            <person name="Glavina del Rio T."/>
            <person name="Dalin E."/>
            <person name="Tice H."/>
            <person name="Bruce D."/>
            <person name="Goodwin L."/>
            <person name="Pitluck S."/>
            <person name="Kiss H."/>
            <person name="Brettin T."/>
            <person name="Detter J.C."/>
            <person name="Han C."/>
            <person name="Kuske C.R."/>
            <person name="Schmutz J."/>
            <person name="Larimer F."/>
            <person name="Land M."/>
            <person name="Hauser L."/>
            <person name="Kyrpides N."/>
            <person name="Mikhailova N."/>
            <person name="Ingram L."/>
            <person name="Richardson P."/>
        </authorList>
    </citation>
    <scope>NUCLEOTIDE SEQUENCE [LARGE SCALE GENOMIC DNA]</scope>
    <source>
        <strain>ATCC 8739 / DSM 1576 / NBRC 3972 / NCIMB 8545 / WDCM 00012 / Crooks</strain>
    </source>
</reference>
<organism>
    <name type="scientific">Escherichia coli (strain ATCC 8739 / DSM 1576 / NBRC 3972 / NCIMB 8545 / WDCM 00012 / Crooks)</name>
    <dbReference type="NCBI Taxonomy" id="481805"/>
    <lineage>
        <taxon>Bacteria</taxon>
        <taxon>Pseudomonadati</taxon>
        <taxon>Pseudomonadota</taxon>
        <taxon>Gammaproteobacteria</taxon>
        <taxon>Enterobacterales</taxon>
        <taxon>Enterobacteriaceae</taxon>
        <taxon>Escherichia</taxon>
    </lineage>
</organism>
<evidence type="ECO:0000255" key="1">
    <source>
        <dbReference type="HAMAP-Rule" id="MF_01640"/>
    </source>
</evidence>
<comment type="function">
    <text evidence="1">Catalyzes the NAD-dependent conversion of D-erythrose 4-phosphate to 4-phosphoerythronate.</text>
</comment>
<comment type="catalytic activity">
    <reaction evidence="1">
        <text>D-erythrose 4-phosphate + NAD(+) + H2O = 4-phospho-D-erythronate + NADH + 2 H(+)</text>
        <dbReference type="Rhea" id="RHEA:12056"/>
        <dbReference type="ChEBI" id="CHEBI:15377"/>
        <dbReference type="ChEBI" id="CHEBI:15378"/>
        <dbReference type="ChEBI" id="CHEBI:16897"/>
        <dbReference type="ChEBI" id="CHEBI:57540"/>
        <dbReference type="ChEBI" id="CHEBI:57945"/>
        <dbReference type="ChEBI" id="CHEBI:58766"/>
        <dbReference type="EC" id="1.2.1.72"/>
    </reaction>
</comment>
<comment type="pathway">
    <text evidence="1">Cofactor biosynthesis; pyridoxine 5'-phosphate biosynthesis; pyridoxine 5'-phosphate from D-erythrose 4-phosphate: step 1/5.</text>
</comment>
<comment type="subunit">
    <text evidence="1">Homotetramer.</text>
</comment>
<comment type="subcellular location">
    <subcellularLocation>
        <location evidence="1">Cytoplasm</location>
    </subcellularLocation>
</comment>
<comment type="similarity">
    <text evidence="1">Belongs to the glyceraldehyde-3-phosphate dehydrogenase family. Epd subfamily.</text>
</comment>
<accession>B1IT76</accession>
<keyword id="KW-0963">Cytoplasm</keyword>
<keyword id="KW-0520">NAD</keyword>
<keyword id="KW-0560">Oxidoreductase</keyword>
<keyword id="KW-0664">Pyridoxine biosynthesis</keyword>
<feature type="chain" id="PRO_1000088206" description="D-erythrose-4-phosphate dehydrogenase">
    <location>
        <begin position="1"/>
        <end position="339"/>
    </location>
</feature>
<feature type="active site" description="Nucleophile" evidence="1">
    <location>
        <position position="155"/>
    </location>
</feature>
<feature type="binding site" evidence="1">
    <location>
        <begin position="12"/>
        <end position="13"/>
    </location>
    <ligand>
        <name>NAD(+)</name>
        <dbReference type="ChEBI" id="CHEBI:57540"/>
    </ligand>
</feature>
<feature type="binding site" evidence="1">
    <location>
        <position position="81"/>
    </location>
    <ligand>
        <name>NAD(+)</name>
        <dbReference type="ChEBI" id="CHEBI:57540"/>
    </ligand>
</feature>
<feature type="binding site" evidence="1">
    <location>
        <begin position="154"/>
        <end position="156"/>
    </location>
    <ligand>
        <name>substrate</name>
    </ligand>
</feature>
<feature type="binding site" evidence="1">
    <location>
        <position position="200"/>
    </location>
    <ligand>
        <name>substrate</name>
    </ligand>
</feature>
<feature type="binding site" evidence="1">
    <location>
        <begin position="213"/>
        <end position="214"/>
    </location>
    <ligand>
        <name>substrate</name>
    </ligand>
</feature>
<feature type="binding site" evidence="1">
    <location>
        <position position="236"/>
    </location>
    <ligand>
        <name>substrate</name>
    </ligand>
</feature>
<feature type="binding site" evidence="1">
    <location>
        <position position="318"/>
    </location>
    <ligand>
        <name>NAD(+)</name>
        <dbReference type="ChEBI" id="CHEBI:57540"/>
    </ligand>
</feature>
<feature type="site" description="Activates thiol group during catalysis" evidence="1">
    <location>
        <position position="182"/>
    </location>
</feature>
<dbReference type="EC" id="1.2.1.72" evidence="1"/>
<dbReference type="EMBL" id="CP000946">
    <property type="protein sequence ID" value="ACA76455.1"/>
    <property type="molecule type" value="Genomic_DNA"/>
</dbReference>
<dbReference type="RefSeq" id="WP_000218480.1">
    <property type="nucleotide sequence ID" value="NZ_MTFT01000004.1"/>
</dbReference>
<dbReference type="SMR" id="B1IT76"/>
<dbReference type="GeneID" id="93779071"/>
<dbReference type="KEGG" id="ecl:EcolC_0783"/>
<dbReference type="HOGENOM" id="CLU_030140_0_2_6"/>
<dbReference type="UniPathway" id="UPA00244">
    <property type="reaction ID" value="UER00309"/>
</dbReference>
<dbReference type="GO" id="GO:0005737">
    <property type="term" value="C:cytoplasm"/>
    <property type="evidence" value="ECO:0007669"/>
    <property type="project" value="UniProtKB-SubCell"/>
</dbReference>
<dbReference type="GO" id="GO:0048001">
    <property type="term" value="F:erythrose-4-phosphate dehydrogenase activity"/>
    <property type="evidence" value="ECO:0007669"/>
    <property type="project" value="UniProtKB-UniRule"/>
</dbReference>
<dbReference type="GO" id="GO:0051287">
    <property type="term" value="F:NAD binding"/>
    <property type="evidence" value="ECO:0007669"/>
    <property type="project" value="InterPro"/>
</dbReference>
<dbReference type="GO" id="GO:0042823">
    <property type="term" value="P:pyridoxal phosphate biosynthetic process"/>
    <property type="evidence" value="ECO:0007669"/>
    <property type="project" value="UniProtKB-UniRule"/>
</dbReference>
<dbReference type="GO" id="GO:0008615">
    <property type="term" value="P:pyridoxine biosynthetic process"/>
    <property type="evidence" value="ECO:0007669"/>
    <property type="project" value="UniProtKB-UniRule"/>
</dbReference>
<dbReference type="CDD" id="cd23937">
    <property type="entry name" value="GAPDH_C_E4PDH"/>
    <property type="match status" value="1"/>
</dbReference>
<dbReference type="CDD" id="cd17892">
    <property type="entry name" value="GAPDH_N_E4PDH"/>
    <property type="match status" value="1"/>
</dbReference>
<dbReference type="FunFam" id="3.30.360.10:FF:000007">
    <property type="entry name" value="D-erythrose-4-phosphate dehydrogenase"/>
    <property type="match status" value="1"/>
</dbReference>
<dbReference type="FunFam" id="3.40.50.720:FF:000001">
    <property type="entry name" value="Glyceraldehyde-3-phosphate dehydrogenase"/>
    <property type="match status" value="1"/>
</dbReference>
<dbReference type="Gene3D" id="3.30.360.10">
    <property type="entry name" value="Dihydrodipicolinate Reductase, domain 2"/>
    <property type="match status" value="1"/>
</dbReference>
<dbReference type="Gene3D" id="3.40.50.720">
    <property type="entry name" value="NAD(P)-binding Rossmann-like Domain"/>
    <property type="match status" value="1"/>
</dbReference>
<dbReference type="HAMAP" id="MF_01640">
    <property type="entry name" value="E4P_dehydrog"/>
    <property type="match status" value="1"/>
</dbReference>
<dbReference type="InterPro" id="IPR006422">
    <property type="entry name" value="E4P_DH_bac"/>
</dbReference>
<dbReference type="InterPro" id="IPR020831">
    <property type="entry name" value="GlycerAld/Erythrose_P_DH"/>
</dbReference>
<dbReference type="InterPro" id="IPR020830">
    <property type="entry name" value="GlycerAld_3-P_DH_AS"/>
</dbReference>
<dbReference type="InterPro" id="IPR020829">
    <property type="entry name" value="GlycerAld_3-P_DH_cat"/>
</dbReference>
<dbReference type="InterPro" id="IPR020828">
    <property type="entry name" value="GlycerAld_3-P_DH_NAD(P)-bd"/>
</dbReference>
<dbReference type="InterPro" id="IPR036291">
    <property type="entry name" value="NAD(P)-bd_dom_sf"/>
</dbReference>
<dbReference type="NCBIfam" id="TIGR01532">
    <property type="entry name" value="E4PD_g-proteo"/>
    <property type="match status" value="1"/>
</dbReference>
<dbReference type="NCBIfam" id="NF010058">
    <property type="entry name" value="PRK13535.1"/>
    <property type="match status" value="1"/>
</dbReference>
<dbReference type="PANTHER" id="PTHR43148">
    <property type="entry name" value="GLYCERALDEHYDE-3-PHOSPHATE DEHYDROGENASE 2"/>
    <property type="match status" value="1"/>
</dbReference>
<dbReference type="Pfam" id="PF02800">
    <property type="entry name" value="Gp_dh_C"/>
    <property type="match status" value="1"/>
</dbReference>
<dbReference type="Pfam" id="PF00044">
    <property type="entry name" value="Gp_dh_N"/>
    <property type="match status" value="1"/>
</dbReference>
<dbReference type="PIRSF" id="PIRSF000149">
    <property type="entry name" value="GAP_DH"/>
    <property type="match status" value="1"/>
</dbReference>
<dbReference type="PRINTS" id="PR00078">
    <property type="entry name" value="G3PDHDRGNASE"/>
</dbReference>
<dbReference type="SMART" id="SM00846">
    <property type="entry name" value="Gp_dh_N"/>
    <property type="match status" value="1"/>
</dbReference>
<dbReference type="SUPFAM" id="SSF55347">
    <property type="entry name" value="Glyceraldehyde-3-phosphate dehydrogenase-like, C-terminal domain"/>
    <property type="match status" value="1"/>
</dbReference>
<dbReference type="SUPFAM" id="SSF51735">
    <property type="entry name" value="NAD(P)-binding Rossmann-fold domains"/>
    <property type="match status" value="1"/>
</dbReference>
<dbReference type="PROSITE" id="PS00071">
    <property type="entry name" value="GAPDH"/>
    <property type="match status" value="1"/>
</dbReference>
<gene>
    <name evidence="1" type="primary">epd</name>
    <name type="ordered locus">EcolC_0783</name>
</gene>
<name>E4PD_ECOLC</name>
<protein>
    <recommendedName>
        <fullName evidence="1">D-erythrose-4-phosphate dehydrogenase</fullName>
        <shortName evidence="1">E4PDH</shortName>
        <ecNumber evidence="1">1.2.1.72</ecNumber>
    </recommendedName>
</protein>
<sequence length="339" mass="37299">MTVRVAINGFGRIGRNVVRALYESGRRAEITVVAINELADAAGMAHLLKYDTSHGRFAWEVRQERDQLFVGDDAIRVLHERSLQSLPWRELGVDVVLDCTGVYGSREHGEAHIAAGAKKVLFSHPGSNDLDATVVYGVNQDQLRAEHRIVSNASCTTNCIIPVIKLLDDAYGIESGTVTTIHSAMHDQQVIDAYHPDLRRTRAASQSIIPVDTKLAAGITRFFPQFNDRFEAIAVRVPTINVTAIDLSVTVKKPVKANEVNLLLQKAAQGAFHGIVDYTELPLVSVDFNHDPHSAIVDGTQTRVSGAHLIKTLVWCDNEWGFANRMLDTTLAMATVAFR</sequence>